<feature type="chain" id="PRO_0000291862" description="Uncharacterized protein C19orf47 homolog">
    <location>
        <begin position="1"/>
        <end position="397"/>
    </location>
</feature>
<feature type="region of interest" description="Disordered" evidence="2">
    <location>
        <begin position="135"/>
        <end position="156"/>
    </location>
</feature>
<feature type="region of interest" description="Disordered" evidence="2">
    <location>
        <begin position="289"/>
        <end position="316"/>
    </location>
</feature>
<feature type="region of interest" description="Disordered" evidence="2">
    <location>
        <begin position="354"/>
        <end position="397"/>
    </location>
</feature>
<feature type="compositionally biased region" description="Low complexity" evidence="2">
    <location>
        <begin position="300"/>
        <end position="316"/>
    </location>
</feature>
<feature type="compositionally biased region" description="Polar residues" evidence="2">
    <location>
        <begin position="356"/>
        <end position="367"/>
    </location>
</feature>
<feature type="compositionally biased region" description="Basic residues" evidence="2">
    <location>
        <begin position="385"/>
        <end position="397"/>
    </location>
</feature>
<feature type="modified residue" description="Phosphoserine" evidence="1">
    <location>
        <position position="115"/>
    </location>
</feature>
<feature type="modified residue" description="Phosphoserine" evidence="1">
    <location>
        <position position="141"/>
    </location>
</feature>
<feature type="modified residue" description="Phosphoserine" evidence="1">
    <location>
        <position position="269"/>
    </location>
</feature>
<feature type="modified residue" description="Phosphoserine" evidence="1">
    <location>
        <position position="296"/>
    </location>
</feature>
<feature type="modified residue" description="Phosphoserine" evidence="1">
    <location>
        <position position="342"/>
    </location>
</feature>
<feature type="cross-link" description="Glycyl lysine isopeptide (Lys-Gly) (interchain with G-Cter in SUMO2)" evidence="1">
    <location>
        <position position="239"/>
    </location>
</feature>
<organism>
    <name type="scientific">Rattus norvegicus</name>
    <name type="common">Rat</name>
    <dbReference type="NCBI Taxonomy" id="10116"/>
    <lineage>
        <taxon>Eukaryota</taxon>
        <taxon>Metazoa</taxon>
        <taxon>Chordata</taxon>
        <taxon>Craniata</taxon>
        <taxon>Vertebrata</taxon>
        <taxon>Euteleostomi</taxon>
        <taxon>Mammalia</taxon>
        <taxon>Eutheria</taxon>
        <taxon>Euarchontoglires</taxon>
        <taxon>Glires</taxon>
        <taxon>Rodentia</taxon>
        <taxon>Myomorpha</taxon>
        <taxon>Muroidea</taxon>
        <taxon>Muridae</taxon>
        <taxon>Murinae</taxon>
        <taxon>Rattus</taxon>
    </lineage>
</organism>
<dbReference type="EMBL" id="BC127543">
    <property type="protein sequence ID" value="AAI27544.1"/>
    <property type="molecule type" value="mRNA"/>
</dbReference>
<dbReference type="RefSeq" id="NP_001406375.1">
    <property type="nucleotide sequence ID" value="NM_001419446.1"/>
</dbReference>
<dbReference type="RefSeq" id="XP_006228633.1">
    <property type="nucleotide sequence ID" value="XM_006228571.2"/>
</dbReference>
<dbReference type="SMR" id="A0JPQ7"/>
<dbReference type="FunCoup" id="A0JPQ7">
    <property type="interactions" value="906"/>
</dbReference>
<dbReference type="GlyGen" id="A0JPQ7">
    <property type="glycosylation" value="1 site"/>
</dbReference>
<dbReference type="iPTMnet" id="A0JPQ7"/>
<dbReference type="PhosphoSitePlus" id="A0JPQ7"/>
<dbReference type="PaxDb" id="10116-ENSRNOP00000024829"/>
<dbReference type="PeptideAtlas" id="A0JPQ7"/>
<dbReference type="GeneID" id="292739"/>
<dbReference type="UCSC" id="RGD:1307554">
    <property type="organism name" value="rat"/>
</dbReference>
<dbReference type="AGR" id="RGD:1307554"/>
<dbReference type="RGD" id="1307554">
    <property type="gene designation" value="C1h19orf47"/>
</dbReference>
<dbReference type="VEuPathDB" id="HostDB:ENSRNOG00000018408"/>
<dbReference type="eggNOG" id="KOG3930">
    <property type="taxonomic scope" value="Eukaryota"/>
</dbReference>
<dbReference type="InParanoid" id="A0JPQ7"/>
<dbReference type="PhylomeDB" id="A0JPQ7"/>
<dbReference type="TreeFam" id="TF317361"/>
<dbReference type="PRO" id="PR:A0JPQ7"/>
<dbReference type="Proteomes" id="UP000002494">
    <property type="component" value="Chromosome 1"/>
</dbReference>
<dbReference type="Bgee" id="ENSRNOG00000018408">
    <property type="expression patterns" value="Expressed in skeletal muscle tissue and 20 other cell types or tissues"/>
</dbReference>
<dbReference type="ExpressionAtlas" id="A0JPQ7">
    <property type="expression patterns" value="baseline and differential"/>
</dbReference>
<dbReference type="GO" id="GO:0005634">
    <property type="term" value="C:nucleus"/>
    <property type="evidence" value="ECO:0000318"/>
    <property type="project" value="GO_Central"/>
</dbReference>
<dbReference type="CDD" id="cd09531">
    <property type="entry name" value="SAM_CS047"/>
    <property type="match status" value="1"/>
</dbReference>
<dbReference type="FunFam" id="1.10.150.50:FF:000041">
    <property type="entry name" value="Chromosome 19 C19orf47 homolog"/>
    <property type="match status" value="1"/>
</dbReference>
<dbReference type="Gene3D" id="1.10.150.50">
    <property type="entry name" value="Transcription Factor, Ets-1"/>
    <property type="match status" value="1"/>
</dbReference>
<dbReference type="InterPro" id="IPR039161">
    <property type="entry name" value="C19orf47-like"/>
</dbReference>
<dbReference type="InterPro" id="IPR040772">
    <property type="entry name" value="C19orf47_SAM"/>
</dbReference>
<dbReference type="InterPro" id="IPR041477">
    <property type="entry name" value="DUF5577"/>
</dbReference>
<dbReference type="InterPro" id="IPR013761">
    <property type="entry name" value="SAM/pointed_sf"/>
</dbReference>
<dbReference type="PANTHER" id="PTHR21359">
    <property type="entry name" value="DUF5577 DOMAIN-CONTAINING PROTEIN"/>
    <property type="match status" value="1"/>
</dbReference>
<dbReference type="PANTHER" id="PTHR21359:SF1">
    <property type="entry name" value="DUF5577 DOMAIN-CONTAINING PROTEIN"/>
    <property type="match status" value="1"/>
</dbReference>
<dbReference type="Pfam" id="PF17740">
    <property type="entry name" value="DUF5577"/>
    <property type="match status" value="1"/>
</dbReference>
<dbReference type="Pfam" id="PF18017">
    <property type="entry name" value="SAM_4"/>
    <property type="match status" value="1"/>
</dbReference>
<dbReference type="SUPFAM" id="SSF47769">
    <property type="entry name" value="SAM/Pointed domain"/>
    <property type="match status" value="1"/>
</dbReference>
<protein>
    <recommendedName>
        <fullName>Uncharacterized protein C19orf47 homolog</fullName>
    </recommendedName>
</protein>
<reference key="1">
    <citation type="journal article" date="2004" name="Genome Res.">
        <title>The status, quality, and expansion of the NIH full-length cDNA project: the Mammalian Gene Collection (MGC).</title>
        <authorList>
            <consortium name="The MGC Project Team"/>
        </authorList>
    </citation>
    <scope>NUCLEOTIDE SEQUENCE [LARGE SCALE MRNA]</scope>
    <source>
        <tissue>Brain</tissue>
    </source>
</reference>
<sequence length="397" mass="43114">MGFRIRESLLLNLRKVPGSRVKARETMVSVTMATSEWIQFFKEAGIPPGPAVNYAVMFVDNRIQKSMLLDLNKEIMNELGVTVVGDIIAILKHAKVVHRQDMCKAATASVPCTPSPLQGELRRGASSAASRMIANSLNHDSPPHTPARRSDNSTSKISVTVSNKVAVKNAKAAALAHREEESLVVPTKRRRVTAEMEGKYIIHMPKGTTPRTRKILEQQQAAKGLHRTSVFDRLGAETKADTTTGTKPTGVFSRLGATPEMDEELAWDSDNDSSSSSVLQYAGVLKKLGRGPTKASPQPALTVKAKATSSATTLASTPKLRRLALPSRPGPEKKPESLPKVSILKRLGKAAVVSEAQDSQVTSTKSPTVRCIVPDPPAPLASQRPPRRRWRRTCKDC</sequence>
<accession>A0JPQ7</accession>
<evidence type="ECO:0000250" key="1">
    <source>
        <dbReference type="UniProtKB" id="Q8N9M1"/>
    </source>
</evidence>
<evidence type="ECO:0000256" key="2">
    <source>
        <dbReference type="SAM" id="MobiDB-lite"/>
    </source>
</evidence>
<keyword id="KW-1017">Isopeptide bond</keyword>
<keyword id="KW-0597">Phosphoprotein</keyword>
<keyword id="KW-1185">Reference proteome</keyword>
<keyword id="KW-0832">Ubl conjugation</keyword>
<name>CS047_RAT</name>
<proteinExistence type="evidence at transcript level"/>